<proteinExistence type="inferred from homology"/>
<keyword id="KW-0004">4Fe-4S</keyword>
<keyword id="KW-0028">Amino-acid biosynthesis</keyword>
<keyword id="KW-0100">Branched-chain amino acid biosynthesis</keyword>
<keyword id="KW-0408">Iron</keyword>
<keyword id="KW-0411">Iron-sulfur</keyword>
<keyword id="KW-0432">Leucine biosynthesis</keyword>
<keyword id="KW-0456">Lyase</keyword>
<keyword id="KW-0479">Metal-binding</keyword>
<keyword id="KW-1185">Reference proteome</keyword>
<comment type="function">
    <text evidence="1">Catalyzes the isomerization between 2-isopropylmalate and 3-isopropylmalate, via the formation of 2-isopropylmaleate.</text>
</comment>
<comment type="catalytic activity">
    <reaction evidence="1">
        <text>(2R,3S)-3-isopropylmalate = (2S)-2-isopropylmalate</text>
        <dbReference type="Rhea" id="RHEA:32287"/>
        <dbReference type="ChEBI" id="CHEBI:1178"/>
        <dbReference type="ChEBI" id="CHEBI:35121"/>
        <dbReference type="EC" id="4.2.1.33"/>
    </reaction>
</comment>
<comment type="cofactor">
    <cofactor evidence="1">
        <name>[4Fe-4S] cluster</name>
        <dbReference type="ChEBI" id="CHEBI:49883"/>
    </cofactor>
    <text evidence="1">Binds 1 [4Fe-4S] cluster per subunit.</text>
</comment>
<comment type="pathway">
    <text evidence="1">Amino-acid biosynthesis; L-leucine biosynthesis; L-leucine from 3-methyl-2-oxobutanoate: step 2/4.</text>
</comment>
<comment type="subunit">
    <text evidence="1">Heterodimer of LeuC and LeuD.</text>
</comment>
<comment type="similarity">
    <text evidence="1">Belongs to the aconitase/IPM isomerase family. LeuC type 1 subfamily.</text>
</comment>
<reference key="1">
    <citation type="journal article" date="2007" name="PLoS Genet.">
        <title>Patterns and implications of gene gain and loss in the evolution of Prochlorococcus.</title>
        <authorList>
            <person name="Kettler G.C."/>
            <person name="Martiny A.C."/>
            <person name="Huang K."/>
            <person name="Zucker J."/>
            <person name="Coleman M.L."/>
            <person name="Rodrigue S."/>
            <person name="Chen F."/>
            <person name="Lapidus A."/>
            <person name="Ferriera S."/>
            <person name="Johnson J."/>
            <person name="Steglich C."/>
            <person name="Church G.M."/>
            <person name="Richardson P."/>
            <person name="Chisholm S.W."/>
        </authorList>
    </citation>
    <scope>NUCLEOTIDE SEQUENCE [LARGE SCALE GENOMIC DNA]</scope>
    <source>
        <strain>NATL2A</strain>
    </source>
</reference>
<name>LEUC_PROMT</name>
<evidence type="ECO:0000255" key="1">
    <source>
        <dbReference type="HAMAP-Rule" id="MF_01026"/>
    </source>
</evidence>
<accession>Q46HB8</accession>
<dbReference type="EC" id="4.2.1.33" evidence="1"/>
<dbReference type="EMBL" id="CP000095">
    <property type="protein sequence ID" value="AAZ59110.1"/>
    <property type="molecule type" value="Genomic_DNA"/>
</dbReference>
<dbReference type="RefSeq" id="WP_011294255.1">
    <property type="nucleotide sequence ID" value="NC_007335.2"/>
</dbReference>
<dbReference type="SMR" id="Q46HB8"/>
<dbReference type="STRING" id="59920.PMN2A_1622"/>
<dbReference type="KEGG" id="pmn:PMN2A_1622"/>
<dbReference type="HOGENOM" id="CLU_006714_3_4_3"/>
<dbReference type="OrthoDB" id="9802769at2"/>
<dbReference type="PhylomeDB" id="Q46HB8"/>
<dbReference type="UniPathway" id="UPA00048">
    <property type="reaction ID" value="UER00071"/>
</dbReference>
<dbReference type="Proteomes" id="UP000002535">
    <property type="component" value="Chromosome"/>
</dbReference>
<dbReference type="GO" id="GO:0003861">
    <property type="term" value="F:3-isopropylmalate dehydratase activity"/>
    <property type="evidence" value="ECO:0007669"/>
    <property type="project" value="UniProtKB-UniRule"/>
</dbReference>
<dbReference type="GO" id="GO:0051539">
    <property type="term" value="F:4 iron, 4 sulfur cluster binding"/>
    <property type="evidence" value="ECO:0007669"/>
    <property type="project" value="UniProtKB-KW"/>
</dbReference>
<dbReference type="GO" id="GO:0046872">
    <property type="term" value="F:metal ion binding"/>
    <property type="evidence" value="ECO:0007669"/>
    <property type="project" value="UniProtKB-KW"/>
</dbReference>
<dbReference type="GO" id="GO:0009098">
    <property type="term" value="P:L-leucine biosynthetic process"/>
    <property type="evidence" value="ECO:0007669"/>
    <property type="project" value="UniProtKB-UniRule"/>
</dbReference>
<dbReference type="CDD" id="cd01583">
    <property type="entry name" value="IPMI"/>
    <property type="match status" value="1"/>
</dbReference>
<dbReference type="Gene3D" id="3.30.499.10">
    <property type="entry name" value="Aconitase, domain 3"/>
    <property type="match status" value="2"/>
</dbReference>
<dbReference type="HAMAP" id="MF_01026">
    <property type="entry name" value="LeuC_type1"/>
    <property type="match status" value="1"/>
</dbReference>
<dbReference type="InterPro" id="IPR004430">
    <property type="entry name" value="3-IsopropMal_deHydase_lsu"/>
</dbReference>
<dbReference type="InterPro" id="IPR015931">
    <property type="entry name" value="Acnase/IPM_dHydase_lsu_aba_1/3"/>
</dbReference>
<dbReference type="InterPro" id="IPR001030">
    <property type="entry name" value="Acoase/IPM_deHydtase_lsu_aba"/>
</dbReference>
<dbReference type="InterPro" id="IPR018136">
    <property type="entry name" value="Aconitase_4Fe-4S_BS"/>
</dbReference>
<dbReference type="InterPro" id="IPR036008">
    <property type="entry name" value="Aconitase_4Fe-4S_dom"/>
</dbReference>
<dbReference type="InterPro" id="IPR050067">
    <property type="entry name" value="IPM_dehydratase_rel_enz"/>
</dbReference>
<dbReference type="InterPro" id="IPR033941">
    <property type="entry name" value="IPMI_cat"/>
</dbReference>
<dbReference type="NCBIfam" id="TIGR00170">
    <property type="entry name" value="leuC"/>
    <property type="match status" value="1"/>
</dbReference>
<dbReference type="NCBIfam" id="NF004016">
    <property type="entry name" value="PRK05478.1"/>
    <property type="match status" value="1"/>
</dbReference>
<dbReference type="NCBIfam" id="NF009116">
    <property type="entry name" value="PRK12466.1"/>
    <property type="match status" value="1"/>
</dbReference>
<dbReference type="PANTHER" id="PTHR43822:SF9">
    <property type="entry name" value="3-ISOPROPYLMALATE DEHYDRATASE"/>
    <property type="match status" value="1"/>
</dbReference>
<dbReference type="PANTHER" id="PTHR43822">
    <property type="entry name" value="HOMOACONITASE, MITOCHONDRIAL-RELATED"/>
    <property type="match status" value="1"/>
</dbReference>
<dbReference type="Pfam" id="PF00330">
    <property type="entry name" value="Aconitase"/>
    <property type="match status" value="1"/>
</dbReference>
<dbReference type="PRINTS" id="PR00415">
    <property type="entry name" value="ACONITASE"/>
</dbReference>
<dbReference type="SUPFAM" id="SSF53732">
    <property type="entry name" value="Aconitase iron-sulfur domain"/>
    <property type="match status" value="1"/>
</dbReference>
<dbReference type="PROSITE" id="PS00450">
    <property type="entry name" value="ACONITASE_1"/>
    <property type="match status" value="1"/>
</dbReference>
<dbReference type="PROSITE" id="PS01244">
    <property type="entry name" value="ACONITASE_2"/>
    <property type="match status" value="1"/>
</dbReference>
<organism>
    <name type="scientific">Prochlorococcus marinus (strain NATL2A)</name>
    <dbReference type="NCBI Taxonomy" id="59920"/>
    <lineage>
        <taxon>Bacteria</taxon>
        <taxon>Bacillati</taxon>
        <taxon>Cyanobacteriota</taxon>
        <taxon>Cyanophyceae</taxon>
        <taxon>Synechococcales</taxon>
        <taxon>Prochlorococcaceae</taxon>
        <taxon>Prochlorococcus</taxon>
    </lineage>
</organism>
<protein>
    <recommendedName>
        <fullName evidence="1">3-isopropylmalate dehydratase large subunit</fullName>
        <ecNumber evidence="1">4.2.1.33</ecNumber>
    </recommendedName>
    <alternativeName>
        <fullName evidence="1">Alpha-IPM isomerase</fullName>
        <shortName evidence="1">IPMI</shortName>
    </alternativeName>
    <alternativeName>
        <fullName evidence="1">Isopropylmalate isomerase</fullName>
    </alternativeName>
</protein>
<sequence length="469" mass="50975">MSSRTLYDKVWNFHQVKELPGGSTQLFIGLHLIHEVTSPQAFSALNEKKLGVKFPNLTVATVDHIVPTSNQQRPFSDPLAEEMLATLEKNCKTHGIKFHGIGSNSQGVVHVMAPELGLTQPGMTVACGDSHTSTHGAFGAIAFGIGTSQVRDVLASQSLAMNKLKVRRIWVEGELQKGVYAKDLILHIIRHLGVKGGVGFAYEFAGPAIEKLSMEGRMTICNMAIEGGARCGYINPDETTFKYIKGKEHAPKGQEWDKAISWWKSLASDSKATFDDEIQLDGSSIEPTVTWGITPGQGISIKETIPNPEFLPKNEQQIAKDACKYMNLKPDEPIEGQSIDVCFIGSCTNGRLSDLEEASKIVKGNTVADGIRAFVVPGSQKVAKEAKEKGLDKIFLKAGFEWREPGCSMCLAMNPDKLEGRQISASSSNRNFKGRQGSANGRTLLMSPAMVAAAAINGKVTDVRKFLKE</sequence>
<feature type="chain" id="PRO_0000076781" description="3-isopropylmalate dehydratase large subunit">
    <location>
        <begin position="1"/>
        <end position="469"/>
    </location>
</feature>
<feature type="binding site" evidence="1">
    <location>
        <position position="347"/>
    </location>
    <ligand>
        <name>[4Fe-4S] cluster</name>
        <dbReference type="ChEBI" id="CHEBI:49883"/>
    </ligand>
</feature>
<feature type="binding site" evidence="1">
    <location>
        <position position="407"/>
    </location>
    <ligand>
        <name>[4Fe-4S] cluster</name>
        <dbReference type="ChEBI" id="CHEBI:49883"/>
    </ligand>
</feature>
<feature type="binding site" evidence="1">
    <location>
        <position position="410"/>
    </location>
    <ligand>
        <name>[4Fe-4S] cluster</name>
        <dbReference type="ChEBI" id="CHEBI:49883"/>
    </ligand>
</feature>
<gene>
    <name evidence="1" type="primary">leuC</name>
    <name type="ordered locus">PMN2A_1622</name>
</gene>